<sequence>MKPSIHSLAHQTMQEWVLEQGEKKFRADQIWEWLYRKRVQSFEEMTNLSKDLIAKLNDQFVVNPLKQRIVQESADGTVKYLFELPDGMLIETVLMCQHYGLSVCVTTQVGCNIGCTFCSSGLIKKQRDLNNGEIVAQIMLVQKYFDERGQDERVSHIVVMGIGEPFDNYNNVLNFFRTINDDKGMAIGARHITVSTSGLAHKIRDFADEGVQVNLAVSLHAPNNELRSSIMKINRAFPIEKLFAAIEYYIETTNRRVTFEYIMLNEVNDGVEQALELTELLKNIKKLSYVNLIPYNPVSEHDQYSRSPKERVLAFYDTLKKKGVNCVVRQEHGTDIDAACGQLRSNTMKRDRQKAVAAVNP</sequence>
<proteinExistence type="inferred from homology"/>
<reference key="1">
    <citation type="journal article" date="2001" name="Microb. Drug Resist.">
        <title>Annotated draft genomic sequence from a Streptococcus pneumoniae type 19F clinical isolate.</title>
        <authorList>
            <person name="Dopazo J."/>
            <person name="Mendoza A."/>
            <person name="Herrero J."/>
            <person name="Caldara F."/>
            <person name="Humbert Y."/>
            <person name="Friedli L."/>
            <person name="Guerrier M."/>
            <person name="Grand-Schenk E."/>
            <person name="Gandin C."/>
            <person name="de Francesco M."/>
            <person name="Polissi A."/>
            <person name="Buell G."/>
            <person name="Feger G."/>
            <person name="Garcia E."/>
            <person name="Peitsch M."/>
            <person name="Garcia-Bustos J.F."/>
        </authorList>
    </citation>
    <scope>NUCLEOTIDE SEQUENCE [LARGE SCALE GENOMIC DNA]</scope>
    <source>
        <strain>G54</strain>
    </source>
</reference>
<reference key="2">
    <citation type="submission" date="2008-03" db="EMBL/GenBank/DDBJ databases">
        <title>Pneumococcal beta glucoside metabolism investigated by whole genome comparison.</title>
        <authorList>
            <person name="Mulas L."/>
            <person name="Trappetti C."/>
            <person name="Hakenbeck R."/>
            <person name="Iannelli F."/>
            <person name="Pozzi G."/>
            <person name="Davidsen T.M."/>
            <person name="Tettelin H."/>
            <person name="Oggioni M."/>
        </authorList>
    </citation>
    <scope>NUCLEOTIDE SEQUENCE [LARGE SCALE GENOMIC DNA]</scope>
    <source>
        <strain>G54</strain>
    </source>
</reference>
<evidence type="ECO:0000255" key="1">
    <source>
        <dbReference type="HAMAP-Rule" id="MF_01849"/>
    </source>
</evidence>
<evidence type="ECO:0000255" key="2">
    <source>
        <dbReference type="PROSITE-ProRule" id="PRU01266"/>
    </source>
</evidence>
<name>RLMN_STRP4</name>
<protein>
    <recommendedName>
        <fullName evidence="1">Probable dual-specificity RNA methyltransferase RlmN</fullName>
        <ecNumber evidence="1">2.1.1.192</ecNumber>
    </recommendedName>
    <alternativeName>
        <fullName evidence="1">23S rRNA (adenine(2503)-C(2))-methyltransferase</fullName>
    </alternativeName>
    <alternativeName>
        <fullName evidence="1">23S rRNA m2A2503 methyltransferase</fullName>
    </alternativeName>
    <alternativeName>
        <fullName evidence="1">Ribosomal RNA large subunit methyltransferase N</fullName>
    </alternativeName>
    <alternativeName>
        <fullName evidence="1">tRNA (adenine(37)-C(2))-methyltransferase</fullName>
    </alternativeName>
    <alternativeName>
        <fullName evidence="1">tRNA m2A37 methyltransferase</fullName>
    </alternativeName>
</protein>
<organism>
    <name type="scientific">Streptococcus pneumoniae serotype 19F (strain G54)</name>
    <dbReference type="NCBI Taxonomy" id="512566"/>
    <lineage>
        <taxon>Bacteria</taxon>
        <taxon>Bacillati</taxon>
        <taxon>Bacillota</taxon>
        <taxon>Bacilli</taxon>
        <taxon>Lactobacillales</taxon>
        <taxon>Streptococcaceae</taxon>
        <taxon>Streptococcus</taxon>
    </lineage>
</organism>
<keyword id="KW-0004">4Fe-4S</keyword>
<keyword id="KW-0963">Cytoplasm</keyword>
<keyword id="KW-1015">Disulfide bond</keyword>
<keyword id="KW-0408">Iron</keyword>
<keyword id="KW-0411">Iron-sulfur</keyword>
<keyword id="KW-0479">Metal-binding</keyword>
<keyword id="KW-0489">Methyltransferase</keyword>
<keyword id="KW-0698">rRNA processing</keyword>
<keyword id="KW-0949">S-adenosyl-L-methionine</keyword>
<keyword id="KW-0808">Transferase</keyword>
<keyword id="KW-0819">tRNA processing</keyword>
<gene>
    <name evidence="1" type="primary">rlmN</name>
    <name type="ordered locus">SPG_0699</name>
</gene>
<comment type="function">
    <text evidence="1">Specifically methylates position 2 of adenine 2503 in 23S rRNA and position 2 of adenine 37 in tRNAs.</text>
</comment>
<comment type="catalytic activity">
    <reaction evidence="1">
        <text>adenosine(2503) in 23S rRNA + 2 reduced [2Fe-2S]-[ferredoxin] + 2 S-adenosyl-L-methionine = 2-methyladenosine(2503) in 23S rRNA + 5'-deoxyadenosine + L-methionine + 2 oxidized [2Fe-2S]-[ferredoxin] + S-adenosyl-L-homocysteine</text>
        <dbReference type="Rhea" id="RHEA:42916"/>
        <dbReference type="Rhea" id="RHEA-COMP:10000"/>
        <dbReference type="Rhea" id="RHEA-COMP:10001"/>
        <dbReference type="Rhea" id="RHEA-COMP:10152"/>
        <dbReference type="Rhea" id="RHEA-COMP:10282"/>
        <dbReference type="ChEBI" id="CHEBI:17319"/>
        <dbReference type="ChEBI" id="CHEBI:33737"/>
        <dbReference type="ChEBI" id="CHEBI:33738"/>
        <dbReference type="ChEBI" id="CHEBI:57844"/>
        <dbReference type="ChEBI" id="CHEBI:57856"/>
        <dbReference type="ChEBI" id="CHEBI:59789"/>
        <dbReference type="ChEBI" id="CHEBI:74411"/>
        <dbReference type="ChEBI" id="CHEBI:74497"/>
        <dbReference type="EC" id="2.1.1.192"/>
    </reaction>
</comment>
<comment type="catalytic activity">
    <reaction evidence="1">
        <text>adenosine(37) in tRNA + 2 reduced [2Fe-2S]-[ferredoxin] + 2 S-adenosyl-L-methionine = 2-methyladenosine(37) in tRNA + 5'-deoxyadenosine + L-methionine + 2 oxidized [2Fe-2S]-[ferredoxin] + S-adenosyl-L-homocysteine</text>
        <dbReference type="Rhea" id="RHEA:43332"/>
        <dbReference type="Rhea" id="RHEA-COMP:10000"/>
        <dbReference type="Rhea" id="RHEA-COMP:10001"/>
        <dbReference type="Rhea" id="RHEA-COMP:10162"/>
        <dbReference type="Rhea" id="RHEA-COMP:10485"/>
        <dbReference type="ChEBI" id="CHEBI:17319"/>
        <dbReference type="ChEBI" id="CHEBI:33737"/>
        <dbReference type="ChEBI" id="CHEBI:33738"/>
        <dbReference type="ChEBI" id="CHEBI:57844"/>
        <dbReference type="ChEBI" id="CHEBI:57856"/>
        <dbReference type="ChEBI" id="CHEBI:59789"/>
        <dbReference type="ChEBI" id="CHEBI:74411"/>
        <dbReference type="ChEBI" id="CHEBI:74497"/>
        <dbReference type="EC" id="2.1.1.192"/>
    </reaction>
</comment>
<comment type="cofactor">
    <cofactor evidence="1">
        <name>[4Fe-4S] cluster</name>
        <dbReference type="ChEBI" id="CHEBI:49883"/>
    </cofactor>
    <text evidence="1">Binds 1 [4Fe-4S] cluster. The cluster is coordinated with 3 cysteines and an exchangeable S-adenosyl-L-methionine.</text>
</comment>
<comment type="subcellular location">
    <subcellularLocation>
        <location evidence="1">Cytoplasm</location>
    </subcellularLocation>
</comment>
<comment type="miscellaneous">
    <text evidence="1">Reaction proceeds by a ping-pong mechanism involving intermediate methylation of a conserved cysteine residue.</text>
</comment>
<comment type="similarity">
    <text evidence="1">Belongs to the radical SAM superfamily. RlmN family.</text>
</comment>
<feature type="chain" id="PRO_1000188611" description="Probable dual-specificity RNA methyltransferase RlmN">
    <location>
        <begin position="1"/>
        <end position="361"/>
    </location>
</feature>
<feature type="domain" description="Radical SAM core" evidence="2">
    <location>
        <begin position="97"/>
        <end position="329"/>
    </location>
</feature>
<feature type="active site" description="Proton acceptor" evidence="1">
    <location>
        <position position="91"/>
    </location>
</feature>
<feature type="active site" description="S-methylcysteine intermediate" evidence="1">
    <location>
        <position position="340"/>
    </location>
</feature>
<feature type="binding site" evidence="1">
    <location>
        <position position="111"/>
    </location>
    <ligand>
        <name>[4Fe-4S] cluster</name>
        <dbReference type="ChEBI" id="CHEBI:49883"/>
        <note>4Fe-4S-S-AdoMet</note>
    </ligand>
</feature>
<feature type="binding site" evidence="1">
    <location>
        <position position="115"/>
    </location>
    <ligand>
        <name>[4Fe-4S] cluster</name>
        <dbReference type="ChEBI" id="CHEBI:49883"/>
        <note>4Fe-4S-S-AdoMet</note>
    </ligand>
</feature>
<feature type="binding site" evidence="1">
    <location>
        <position position="118"/>
    </location>
    <ligand>
        <name>[4Fe-4S] cluster</name>
        <dbReference type="ChEBI" id="CHEBI:49883"/>
        <note>4Fe-4S-S-AdoMet</note>
    </ligand>
</feature>
<feature type="binding site" evidence="1">
    <location>
        <begin position="163"/>
        <end position="164"/>
    </location>
    <ligand>
        <name>S-adenosyl-L-methionine</name>
        <dbReference type="ChEBI" id="CHEBI:59789"/>
    </ligand>
</feature>
<feature type="binding site" evidence="1">
    <location>
        <position position="195"/>
    </location>
    <ligand>
        <name>S-adenosyl-L-methionine</name>
        <dbReference type="ChEBI" id="CHEBI:59789"/>
    </ligand>
</feature>
<feature type="binding site" evidence="1">
    <location>
        <begin position="218"/>
        <end position="220"/>
    </location>
    <ligand>
        <name>S-adenosyl-L-methionine</name>
        <dbReference type="ChEBI" id="CHEBI:59789"/>
    </ligand>
</feature>
<feature type="binding site" evidence="1">
    <location>
        <position position="296"/>
    </location>
    <ligand>
        <name>S-adenosyl-L-methionine</name>
        <dbReference type="ChEBI" id="CHEBI:59789"/>
    </ligand>
</feature>
<feature type="disulfide bond" description="(transient)" evidence="1">
    <location>
        <begin position="104"/>
        <end position="340"/>
    </location>
</feature>
<accession>B5E369</accession>
<dbReference type="EC" id="2.1.1.192" evidence="1"/>
<dbReference type="EMBL" id="CP001015">
    <property type="protein sequence ID" value="ACF55293.1"/>
    <property type="molecule type" value="Genomic_DNA"/>
</dbReference>
<dbReference type="SMR" id="B5E369"/>
<dbReference type="KEGG" id="spx:SPG_0699"/>
<dbReference type="HOGENOM" id="CLU_029101_0_1_9"/>
<dbReference type="GO" id="GO:0005737">
    <property type="term" value="C:cytoplasm"/>
    <property type="evidence" value="ECO:0007669"/>
    <property type="project" value="UniProtKB-SubCell"/>
</dbReference>
<dbReference type="GO" id="GO:0051539">
    <property type="term" value="F:4 iron, 4 sulfur cluster binding"/>
    <property type="evidence" value="ECO:0007669"/>
    <property type="project" value="UniProtKB-UniRule"/>
</dbReference>
<dbReference type="GO" id="GO:0046872">
    <property type="term" value="F:metal ion binding"/>
    <property type="evidence" value="ECO:0007669"/>
    <property type="project" value="UniProtKB-KW"/>
</dbReference>
<dbReference type="GO" id="GO:0070040">
    <property type="term" value="F:rRNA (adenine(2503)-C2-)-methyltransferase activity"/>
    <property type="evidence" value="ECO:0007669"/>
    <property type="project" value="UniProtKB-UniRule"/>
</dbReference>
<dbReference type="GO" id="GO:0019843">
    <property type="term" value="F:rRNA binding"/>
    <property type="evidence" value="ECO:0007669"/>
    <property type="project" value="UniProtKB-UniRule"/>
</dbReference>
<dbReference type="GO" id="GO:0002935">
    <property type="term" value="F:tRNA (adenine(37)-C2)-methyltransferase activity"/>
    <property type="evidence" value="ECO:0007669"/>
    <property type="project" value="UniProtKB-UniRule"/>
</dbReference>
<dbReference type="GO" id="GO:0000049">
    <property type="term" value="F:tRNA binding"/>
    <property type="evidence" value="ECO:0007669"/>
    <property type="project" value="UniProtKB-UniRule"/>
</dbReference>
<dbReference type="GO" id="GO:0070475">
    <property type="term" value="P:rRNA base methylation"/>
    <property type="evidence" value="ECO:0007669"/>
    <property type="project" value="UniProtKB-UniRule"/>
</dbReference>
<dbReference type="GO" id="GO:0030488">
    <property type="term" value="P:tRNA methylation"/>
    <property type="evidence" value="ECO:0007669"/>
    <property type="project" value="UniProtKB-UniRule"/>
</dbReference>
<dbReference type="CDD" id="cd01335">
    <property type="entry name" value="Radical_SAM"/>
    <property type="match status" value="1"/>
</dbReference>
<dbReference type="FunFam" id="1.10.150.530:FF:000002">
    <property type="entry name" value="Probable dual-specificity RNA methyltransferase RlmN"/>
    <property type="match status" value="1"/>
</dbReference>
<dbReference type="FunFam" id="3.20.20.70:FF:000014">
    <property type="entry name" value="Probable dual-specificity RNA methyltransferase RlmN"/>
    <property type="match status" value="1"/>
</dbReference>
<dbReference type="Gene3D" id="1.10.150.530">
    <property type="match status" value="1"/>
</dbReference>
<dbReference type="Gene3D" id="3.20.20.70">
    <property type="entry name" value="Aldolase class I"/>
    <property type="match status" value="1"/>
</dbReference>
<dbReference type="HAMAP" id="MF_01849">
    <property type="entry name" value="RNA_methyltr_RlmN"/>
    <property type="match status" value="1"/>
</dbReference>
<dbReference type="InterPro" id="IPR013785">
    <property type="entry name" value="Aldolase_TIM"/>
</dbReference>
<dbReference type="InterPro" id="IPR040072">
    <property type="entry name" value="Methyltransferase_A"/>
</dbReference>
<dbReference type="InterPro" id="IPR048641">
    <property type="entry name" value="RlmN_N"/>
</dbReference>
<dbReference type="InterPro" id="IPR027492">
    <property type="entry name" value="RNA_MTrfase_RlmN"/>
</dbReference>
<dbReference type="InterPro" id="IPR004383">
    <property type="entry name" value="rRNA_lsu_MTrfase_RlmN/Cfr"/>
</dbReference>
<dbReference type="InterPro" id="IPR007197">
    <property type="entry name" value="rSAM"/>
</dbReference>
<dbReference type="NCBIfam" id="TIGR00048">
    <property type="entry name" value="rRNA_mod_RlmN"/>
    <property type="match status" value="1"/>
</dbReference>
<dbReference type="PANTHER" id="PTHR30544">
    <property type="entry name" value="23S RRNA METHYLTRANSFERASE"/>
    <property type="match status" value="1"/>
</dbReference>
<dbReference type="PANTHER" id="PTHR30544:SF5">
    <property type="entry name" value="RADICAL SAM CORE DOMAIN-CONTAINING PROTEIN"/>
    <property type="match status" value="1"/>
</dbReference>
<dbReference type="Pfam" id="PF04055">
    <property type="entry name" value="Radical_SAM"/>
    <property type="match status" value="1"/>
</dbReference>
<dbReference type="Pfam" id="PF21016">
    <property type="entry name" value="RlmN_N"/>
    <property type="match status" value="1"/>
</dbReference>
<dbReference type="PIRSF" id="PIRSF006004">
    <property type="entry name" value="CHP00048"/>
    <property type="match status" value="1"/>
</dbReference>
<dbReference type="SFLD" id="SFLDF00275">
    <property type="entry name" value="adenosine_C2_methyltransferase"/>
    <property type="match status" value="1"/>
</dbReference>
<dbReference type="SFLD" id="SFLDS00029">
    <property type="entry name" value="Radical_SAM"/>
    <property type="match status" value="1"/>
</dbReference>
<dbReference type="SUPFAM" id="SSF102114">
    <property type="entry name" value="Radical SAM enzymes"/>
    <property type="match status" value="1"/>
</dbReference>
<dbReference type="PROSITE" id="PS51918">
    <property type="entry name" value="RADICAL_SAM"/>
    <property type="match status" value="1"/>
</dbReference>